<organism>
    <name type="scientific">Xanthomonas oryzae pv. oryzae (strain PXO99A)</name>
    <dbReference type="NCBI Taxonomy" id="360094"/>
    <lineage>
        <taxon>Bacteria</taxon>
        <taxon>Pseudomonadati</taxon>
        <taxon>Pseudomonadota</taxon>
        <taxon>Gammaproteobacteria</taxon>
        <taxon>Lysobacterales</taxon>
        <taxon>Lysobacteraceae</taxon>
        <taxon>Xanthomonas</taxon>
    </lineage>
</organism>
<name>OPGD_XANOP</name>
<reference key="1">
    <citation type="journal article" date="2008" name="BMC Genomics">
        <title>Genome sequence and rapid evolution of the rice pathogen Xanthomonas oryzae pv. oryzae PXO99A.</title>
        <authorList>
            <person name="Salzberg S.L."/>
            <person name="Sommer D.D."/>
            <person name="Schatz M.C."/>
            <person name="Phillippy A.M."/>
            <person name="Rabinowicz P.D."/>
            <person name="Tsuge S."/>
            <person name="Furutani A."/>
            <person name="Ochiai H."/>
            <person name="Delcher A.L."/>
            <person name="Kelley D."/>
            <person name="Madupu R."/>
            <person name="Puiu D."/>
            <person name="Radune D."/>
            <person name="Shumway M."/>
            <person name="Trapnell C."/>
            <person name="Aparna G."/>
            <person name="Jha G."/>
            <person name="Pandey A."/>
            <person name="Patil P.B."/>
            <person name="Ishihara H."/>
            <person name="Meyer D.F."/>
            <person name="Szurek B."/>
            <person name="Verdier V."/>
            <person name="Koebnik R."/>
            <person name="Dow J.M."/>
            <person name="Ryan R.P."/>
            <person name="Hirata H."/>
            <person name="Tsuyumu S."/>
            <person name="Won Lee S."/>
            <person name="Seo Y.-S."/>
            <person name="Sriariyanum M."/>
            <person name="Ronald P.C."/>
            <person name="Sonti R.V."/>
            <person name="Van Sluys M.-A."/>
            <person name="Leach J.E."/>
            <person name="White F.F."/>
            <person name="Bogdanove A.J."/>
        </authorList>
    </citation>
    <scope>NUCLEOTIDE SEQUENCE [LARGE SCALE GENOMIC DNA]</scope>
    <source>
        <strain>PXO99A</strain>
    </source>
</reference>
<sequence>MRMQRRHLLKNAAAALAALGLPALPQWALAAKAVGLRRLGQPQPFDYAWLKGRARELAKAPYKSHKQVLPGPLEALNWDQYQSIRYRQDHALWADGNGKFQAKFFHLGLYFHTPVHIYDIVDGKAQQLAYDPAAFDYGKSGLGGKQLPKDLGFAGFRLNTRKDTERDFSAFLGASYFRAVGKEGQYGQSARGLAIDTGTGGPEEFPDFIAYYLEQPAADSNTVVVYGLLDSPSIAGAYRFAITNGDVLLMDIDSALYPRKTIERLGIGPCTSMYQVGENDNRMDWDWRPEIHDTDGLAMWTGGGEWIWRPLCNPPHVRFNMFVDENPRGFGLLQRDRNFDHYQDDGVFYEKRPCLWVEPKSGWGKGSVQLVEIPTVDETFDNIVAFWNPQAKPQPGQELLMGYRLYWGAQPPASAPLAHCVATRTGLGGIVGQKRSHFSWRFAVDFAGGELAALAKDPKAKVEAVLQVSRGTTEIVSARPLHELKGYRAMFDLVPPDEGTQQIDIRLYLRANGKPLTETWLYQWTPLAASERKN</sequence>
<protein>
    <recommendedName>
        <fullName evidence="1">Glucans biosynthesis protein D</fullName>
    </recommendedName>
</protein>
<gene>
    <name evidence="1" type="primary">opgD</name>
    <name type="ordered locus">PXO_03624</name>
</gene>
<dbReference type="EMBL" id="CP000967">
    <property type="protein sequence ID" value="ACD56900.1"/>
    <property type="molecule type" value="Genomic_DNA"/>
</dbReference>
<dbReference type="SMR" id="B2SHI0"/>
<dbReference type="KEGG" id="xop:PXO_03624"/>
<dbReference type="eggNOG" id="COG3131">
    <property type="taxonomic scope" value="Bacteria"/>
</dbReference>
<dbReference type="HOGENOM" id="CLU_023403_2_0_6"/>
<dbReference type="UniPathway" id="UPA00637"/>
<dbReference type="Proteomes" id="UP000001740">
    <property type="component" value="Chromosome"/>
</dbReference>
<dbReference type="GO" id="GO:0030288">
    <property type="term" value="C:outer membrane-bounded periplasmic space"/>
    <property type="evidence" value="ECO:0007669"/>
    <property type="project" value="TreeGrafter"/>
</dbReference>
<dbReference type="GO" id="GO:0030246">
    <property type="term" value="F:carbohydrate binding"/>
    <property type="evidence" value="ECO:0007669"/>
    <property type="project" value="InterPro"/>
</dbReference>
<dbReference type="GO" id="GO:0003824">
    <property type="term" value="F:catalytic activity"/>
    <property type="evidence" value="ECO:0007669"/>
    <property type="project" value="InterPro"/>
</dbReference>
<dbReference type="GO" id="GO:0051274">
    <property type="term" value="P:beta-glucan biosynthetic process"/>
    <property type="evidence" value="ECO:0007669"/>
    <property type="project" value="TreeGrafter"/>
</dbReference>
<dbReference type="FunFam" id="2.60.40.10:FF:002063">
    <property type="entry name" value="Glucans biosynthesis protein D"/>
    <property type="match status" value="1"/>
</dbReference>
<dbReference type="FunFam" id="2.70.98.10:FF:000001">
    <property type="entry name" value="Glucans biosynthesis protein G"/>
    <property type="match status" value="1"/>
</dbReference>
<dbReference type="Gene3D" id="2.70.98.10">
    <property type="match status" value="1"/>
</dbReference>
<dbReference type="Gene3D" id="2.60.40.10">
    <property type="entry name" value="Immunoglobulins"/>
    <property type="match status" value="1"/>
</dbReference>
<dbReference type="HAMAP" id="MF_01068">
    <property type="entry name" value="MdoD_OpgD"/>
    <property type="match status" value="1"/>
</dbReference>
<dbReference type="InterPro" id="IPR011013">
    <property type="entry name" value="Gal_mutarotase_sf_dom"/>
</dbReference>
<dbReference type="InterPro" id="IPR014718">
    <property type="entry name" value="GH-type_carb-bd"/>
</dbReference>
<dbReference type="InterPro" id="IPR023724">
    <property type="entry name" value="Glucan_biosyn_MdoD"/>
</dbReference>
<dbReference type="InterPro" id="IPR014438">
    <property type="entry name" value="Glucan_biosyn_MdoG/MdoD"/>
</dbReference>
<dbReference type="InterPro" id="IPR007444">
    <property type="entry name" value="Glucan_biosyn_MdoG_C"/>
</dbReference>
<dbReference type="InterPro" id="IPR013783">
    <property type="entry name" value="Ig-like_fold"/>
</dbReference>
<dbReference type="InterPro" id="IPR014756">
    <property type="entry name" value="Ig_E-set"/>
</dbReference>
<dbReference type="InterPro" id="IPR006311">
    <property type="entry name" value="TAT_signal"/>
</dbReference>
<dbReference type="PANTHER" id="PTHR30504">
    <property type="entry name" value="GLUCANS BIOSYNTHESIS PROTEIN"/>
    <property type="match status" value="1"/>
</dbReference>
<dbReference type="PANTHER" id="PTHR30504:SF3">
    <property type="entry name" value="GLUCANS BIOSYNTHESIS PROTEIN D"/>
    <property type="match status" value="1"/>
</dbReference>
<dbReference type="Pfam" id="PF04349">
    <property type="entry name" value="MdoG"/>
    <property type="match status" value="1"/>
</dbReference>
<dbReference type="PIRSF" id="PIRSF006281">
    <property type="entry name" value="MdoG"/>
    <property type="match status" value="1"/>
</dbReference>
<dbReference type="SUPFAM" id="SSF81296">
    <property type="entry name" value="E set domains"/>
    <property type="match status" value="1"/>
</dbReference>
<dbReference type="SUPFAM" id="SSF74650">
    <property type="entry name" value="Galactose mutarotase-like"/>
    <property type="match status" value="1"/>
</dbReference>
<dbReference type="PROSITE" id="PS51318">
    <property type="entry name" value="TAT"/>
    <property type="match status" value="1"/>
</dbReference>
<keyword id="KW-0574">Periplasm</keyword>
<keyword id="KW-0732">Signal</keyword>
<proteinExistence type="inferred from homology"/>
<feature type="signal peptide" description="Tat-type signal" evidence="1">
    <location>
        <begin position="1"/>
        <end position="30"/>
    </location>
</feature>
<feature type="chain" id="PRO_1000136605" description="Glucans biosynthesis protein D">
    <location>
        <begin position="31"/>
        <end position="534"/>
    </location>
</feature>
<evidence type="ECO:0000255" key="1">
    <source>
        <dbReference type="HAMAP-Rule" id="MF_01068"/>
    </source>
</evidence>
<accession>B2SHI0</accession>
<comment type="function">
    <text evidence="1">Probably involved in the control of the structural glucose backbone of osmoregulated periplasmic glucans (OPGs).</text>
</comment>
<comment type="pathway">
    <text evidence="1">Glycan metabolism; osmoregulated periplasmic glucan (OPG) biosynthesis.</text>
</comment>
<comment type="subcellular location">
    <subcellularLocation>
        <location evidence="1">Periplasm</location>
    </subcellularLocation>
</comment>
<comment type="PTM">
    <text>Predicted to be exported by the Tat system. The position of the signal peptide cleavage has not been experimentally proven.</text>
</comment>
<comment type="similarity">
    <text evidence="1">Belongs to the OpgD/OpgG family.</text>
</comment>